<keyword id="KW-0963">Cytoplasm</keyword>
<keyword id="KW-0489">Methyltransferase</keyword>
<keyword id="KW-1185">Reference proteome</keyword>
<keyword id="KW-0949">S-adenosyl-L-methionine</keyword>
<keyword id="KW-0808">Transferase</keyword>
<evidence type="ECO:0000250" key="1">
    <source>
        <dbReference type="UniProtKB" id="Q7Z5W3"/>
    </source>
</evidence>
<evidence type="ECO:0000255" key="2">
    <source>
        <dbReference type="PROSITE-ProRule" id="PRU00848"/>
    </source>
</evidence>
<evidence type="ECO:0000256" key="3">
    <source>
        <dbReference type="SAM" id="MobiDB-lite"/>
    </source>
</evidence>
<evidence type="ECO:0000305" key="4"/>
<organism>
    <name type="scientific">Bos taurus</name>
    <name type="common">Bovine</name>
    <dbReference type="NCBI Taxonomy" id="9913"/>
    <lineage>
        <taxon>Eukaryota</taxon>
        <taxon>Metazoa</taxon>
        <taxon>Chordata</taxon>
        <taxon>Craniata</taxon>
        <taxon>Vertebrata</taxon>
        <taxon>Euteleostomi</taxon>
        <taxon>Mammalia</taxon>
        <taxon>Eutheria</taxon>
        <taxon>Laurasiatheria</taxon>
        <taxon>Artiodactyla</taxon>
        <taxon>Ruminantia</taxon>
        <taxon>Pecora</taxon>
        <taxon>Bovidae</taxon>
        <taxon>Bovinae</taxon>
        <taxon>Bos</taxon>
    </lineage>
</organism>
<protein>
    <recommendedName>
        <fullName evidence="1">RNA 5'-monophosphate methyltransferase</fullName>
        <ecNumber evidence="1">2.1.1.-</ecNumber>
    </recommendedName>
    <alternativeName>
        <fullName>BCDIN3 domain-containing protein</fullName>
    </alternativeName>
</protein>
<accession>Q29S19</accession>
<feature type="chain" id="PRO_0000289264" description="RNA 5'-monophosphate methyltransferase">
    <location>
        <begin position="1"/>
        <end position="292"/>
    </location>
</feature>
<feature type="domain" description="Bin3-type SAM" evidence="2">
    <location>
        <begin position="53"/>
        <end position="274"/>
    </location>
</feature>
<feature type="region of interest" description="Disordered" evidence="3">
    <location>
        <begin position="1"/>
        <end position="22"/>
    </location>
</feature>
<feature type="binding site" evidence="1">
    <location>
        <position position="46"/>
    </location>
    <ligand>
        <name>S-adenosyl-L-methionine</name>
        <dbReference type="ChEBI" id="CHEBI:59789"/>
    </ligand>
</feature>
<feature type="binding site" evidence="1">
    <location>
        <position position="76"/>
    </location>
    <ligand>
        <name>S-adenosyl-L-methionine</name>
        <dbReference type="ChEBI" id="CHEBI:59789"/>
    </ligand>
</feature>
<feature type="binding site" evidence="1">
    <location>
        <position position="110"/>
    </location>
    <ligand>
        <name>S-adenosyl-L-methionine</name>
        <dbReference type="ChEBI" id="CHEBI:59789"/>
    </ligand>
</feature>
<feature type="binding site" evidence="1">
    <location>
        <begin position="135"/>
        <end position="136"/>
    </location>
    <ligand>
        <name>S-adenosyl-L-methionine</name>
        <dbReference type="ChEBI" id="CHEBI:59789"/>
    </ligand>
</feature>
<feature type="binding site" evidence="1">
    <location>
        <position position="164"/>
    </location>
    <ligand>
        <name>S-adenosyl-L-methionine</name>
        <dbReference type="ChEBI" id="CHEBI:59789"/>
    </ligand>
</feature>
<reference key="1">
    <citation type="submission" date="2006-02" db="EMBL/GenBank/DDBJ databases">
        <authorList>
            <consortium name="NIH - Mammalian Gene Collection (MGC) project"/>
        </authorList>
    </citation>
    <scope>NUCLEOTIDE SEQUENCE [LARGE SCALE MRNA]</scope>
    <source>
        <strain>Hereford</strain>
        <tissue>Uterus</tissue>
    </source>
</reference>
<name>BN3D2_BOVIN</name>
<dbReference type="EC" id="2.1.1.-" evidence="1"/>
<dbReference type="EMBL" id="BC113219">
    <property type="protein sequence ID" value="AAI13220.1"/>
    <property type="molecule type" value="mRNA"/>
</dbReference>
<dbReference type="RefSeq" id="NP_001068684.1">
    <property type="nucleotide sequence ID" value="NM_001075216.1"/>
</dbReference>
<dbReference type="SMR" id="Q29S19"/>
<dbReference type="FunCoup" id="Q29S19">
    <property type="interactions" value="2252"/>
</dbReference>
<dbReference type="STRING" id="9913.ENSBTAP00000023645"/>
<dbReference type="PaxDb" id="9913-ENSBTAP00000023645"/>
<dbReference type="GeneID" id="505650"/>
<dbReference type="KEGG" id="bta:505650"/>
<dbReference type="CTD" id="144233"/>
<dbReference type="eggNOG" id="KOG2899">
    <property type="taxonomic scope" value="Eukaryota"/>
</dbReference>
<dbReference type="HOGENOM" id="CLU_082749_0_0_1"/>
<dbReference type="InParanoid" id="Q29S19"/>
<dbReference type="OrthoDB" id="273070at2759"/>
<dbReference type="TreeFam" id="TF324061"/>
<dbReference type="Proteomes" id="UP000009136">
    <property type="component" value="Unplaced"/>
</dbReference>
<dbReference type="GO" id="GO:0005737">
    <property type="term" value="C:cytoplasm"/>
    <property type="evidence" value="ECO:0000250"/>
    <property type="project" value="UniProtKB"/>
</dbReference>
<dbReference type="GO" id="GO:0008171">
    <property type="term" value="F:O-methyltransferase activity"/>
    <property type="evidence" value="ECO:0000318"/>
    <property type="project" value="GO_Central"/>
</dbReference>
<dbReference type="GO" id="GO:0008173">
    <property type="term" value="F:RNA methyltransferase activity"/>
    <property type="evidence" value="ECO:0000250"/>
    <property type="project" value="UniProtKB"/>
</dbReference>
<dbReference type="GO" id="GO:0090486">
    <property type="term" value="F:small RNA 2'-O-methyltransferase activity"/>
    <property type="evidence" value="ECO:0000250"/>
    <property type="project" value="UniProtKB"/>
</dbReference>
<dbReference type="GO" id="GO:0008175">
    <property type="term" value="F:tRNA methyltransferase activity"/>
    <property type="evidence" value="ECO:0000250"/>
    <property type="project" value="UniProtKB"/>
</dbReference>
<dbReference type="GO" id="GO:2000632">
    <property type="term" value="P:negative regulation of pre-miRNA processing"/>
    <property type="evidence" value="ECO:0000250"/>
    <property type="project" value="UniProtKB"/>
</dbReference>
<dbReference type="GO" id="GO:0030488">
    <property type="term" value="P:tRNA methylation"/>
    <property type="evidence" value="ECO:0000250"/>
    <property type="project" value="UniProtKB"/>
</dbReference>
<dbReference type="FunFam" id="3.40.50.150:FF:000138">
    <property type="entry name" value="BCDIN3 domain containing RNA methyltransferase"/>
    <property type="match status" value="1"/>
</dbReference>
<dbReference type="Gene3D" id="3.40.50.150">
    <property type="entry name" value="Vaccinia Virus protein VP39"/>
    <property type="match status" value="1"/>
</dbReference>
<dbReference type="InterPro" id="IPR039772">
    <property type="entry name" value="Bin3-like"/>
</dbReference>
<dbReference type="InterPro" id="IPR010675">
    <property type="entry name" value="Bin3_C"/>
</dbReference>
<dbReference type="InterPro" id="IPR024160">
    <property type="entry name" value="BIN3_SAM-bd_dom"/>
</dbReference>
<dbReference type="InterPro" id="IPR029063">
    <property type="entry name" value="SAM-dependent_MTases_sf"/>
</dbReference>
<dbReference type="PANTHER" id="PTHR12315">
    <property type="entry name" value="BICOID-INTERACTING PROTEIN RELATED"/>
    <property type="match status" value="1"/>
</dbReference>
<dbReference type="PANTHER" id="PTHR12315:SF1">
    <property type="entry name" value="RNA 5'-MONOPHOSPHATE METHYLTRANSFERASE"/>
    <property type="match status" value="1"/>
</dbReference>
<dbReference type="Pfam" id="PF06859">
    <property type="entry name" value="Bin3"/>
    <property type="match status" value="1"/>
</dbReference>
<dbReference type="SUPFAM" id="SSF53335">
    <property type="entry name" value="S-adenosyl-L-methionine-dependent methyltransferases"/>
    <property type="match status" value="1"/>
</dbReference>
<dbReference type="PROSITE" id="PS51515">
    <property type="entry name" value="BIN3_SAM"/>
    <property type="match status" value="1"/>
</dbReference>
<comment type="function">
    <text evidence="1">O-methyltransferase that specifically monomethylates 5'-monophosphate of cytoplasmic histidyl tRNA (tRNA(His)), acting as a capping enzyme by protecting tRNA(His) from cleavage by DICER1. Also able, with less efficiently, to methylate the 5' monophosphate of a subset of pre-miRNAs, acting as a negative regulator of miRNA processing. The 5' monophosphate of pre-miRNAs is recognized by DICER1 and is required for pre-miRNAs processing: methylation at this position reduces the processing of pre-miRNAs by DICER1. Was also reported to mediate dimethylation of pre-miR-145; however dimethylation cannot be reproduced by another group which observes a monomethylation of pre-miR-145.</text>
</comment>
<comment type="catalytic activity">
    <reaction evidence="1">
        <text>a 5'-end 5'-phospho-ribonucleoside-RNA + S-adenosyl-L-methionine = a 5'-end (5'-methylphospho)-ribonucleoside-RNA + S-adenosyl-L-homocysteine</text>
        <dbReference type="Rhea" id="RHEA:58656"/>
        <dbReference type="Rhea" id="RHEA-COMP:15179"/>
        <dbReference type="Rhea" id="RHEA-COMP:15181"/>
        <dbReference type="ChEBI" id="CHEBI:57856"/>
        <dbReference type="ChEBI" id="CHEBI:59789"/>
        <dbReference type="ChEBI" id="CHEBI:138282"/>
        <dbReference type="ChEBI" id="CHEBI:142776"/>
    </reaction>
</comment>
<comment type="catalytic activity">
    <reaction evidence="1">
        <text>a 5'-end 5'-phospho-ribonucleoside-RNA + 2 S-adenosyl-L-methionine = a 5'-end (5'-bismethylphospho)-ribonucleoside-RNA + 2 S-adenosyl-L-homocysteine</text>
        <dbReference type="Rhea" id="RHEA:58640"/>
        <dbReference type="Rhea" id="RHEA-COMP:15179"/>
        <dbReference type="Rhea" id="RHEA-COMP:15182"/>
        <dbReference type="ChEBI" id="CHEBI:57856"/>
        <dbReference type="ChEBI" id="CHEBI:59789"/>
        <dbReference type="ChEBI" id="CHEBI:138282"/>
        <dbReference type="ChEBI" id="CHEBI:142777"/>
    </reaction>
</comment>
<comment type="subunit">
    <text evidence="1">Interacts with DICER1; the interaction may be mediated by RNA.</text>
</comment>
<comment type="subcellular location">
    <subcellularLocation>
        <location evidence="1">Cytoplasm</location>
    </subcellularLocation>
</comment>
<comment type="similarity">
    <text evidence="4">Belongs to the methyltransferase superfamily.</text>
</comment>
<gene>
    <name type="primary">BCDIN3D</name>
</gene>
<proteinExistence type="evidence at transcript level"/>
<sequence length="292" mass="33490">MAASTEQATGGVEKTAAEEKPRVLEPGAAPFGNFPHYSRFHPPEQRLRLLPPELLRRLFPQSPETRPILGLDVGCNSGDLSVALYKHFLSLHDGETCLDASRELHLLCCDIDPVLVERAEKECPFPDGLTFITLDFMNQRTRKVLLSSFLSQFGRSVFDIGFCMSVTMWIHLNHGDQGLWEFLAHLSSLCRYLLVEPQPWKCYRAAARRLRKLGLHDFDHFRSLAIRGDMASQIVQILTQDHGMELVCCFGNTKWDRSLLLFRTKQATETHPIPESLIEEGKERNRIRFWRE</sequence>